<name>GRPE_STRPN</name>
<proteinExistence type="evidence at protein level"/>
<reference key="1">
    <citation type="journal article" date="2001" name="Science">
        <title>Complete genome sequence of a virulent isolate of Streptococcus pneumoniae.</title>
        <authorList>
            <person name="Tettelin H."/>
            <person name="Nelson K.E."/>
            <person name="Paulsen I.T."/>
            <person name="Eisen J.A."/>
            <person name="Read T.D."/>
            <person name="Peterson S.N."/>
            <person name="Heidelberg J.F."/>
            <person name="DeBoy R.T."/>
            <person name="Haft D.H."/>
            <person name="Dodson R.J."/>
            <person name="Durkin A.S."/>
            <person name="Gwinn M.L."/>
            <person name="Kolonay J.F."/>
            <person name="Nelson W.C."/>
            <person name="Peterson J.D."/>
            <person name="Umayam L.A."/>
            <person name="White O."/>
            <person name="Salzberg S.L."/>
            <person name="Lewis M.R."/>
            <person name="Radune D."/>
            <person name="Holtzapple E.K."/>
            <person name="Khouri H.M."/>
            <person name="Wolf A.M."/>
            <person name="Utterback T.R."/>
            <person name="Hansen C.L."/>
            <person name="McDonald L.A."/>
            <person name="Feldblyum T.V."/>
            <person name="Angiuoli S.V."/>
            <person name="Dickinson T."/>
            <person name="Hickey E.K."/>
            <person name="Holt I.E."/>
            <person name="Loftus B.J."/>
            <person name="Yang F."/>
            <person name="Smith H.O."/>
            <person name="Venter J.C."/>
            <person name="Dougherty B.A."/>
            <person name="Morrison D.A."/>
            <person name="Hollingshead S.K."/>
            <person name="Fraser C.M."/>
        </authorList>
    </citation>
    <scope>NUCLEOTIDE SEQUENCE [LARGE SCALE GENOMIC DNA]</scope>
    <source>
        <strain>ATCC BAA-334 / TIGR4</strain>
    </source>
</reference>
<reference key="2">
    <citation type="submission" date="1999-01" db="EMBL/GenBank/DDBJ databases">
        <authorList>
            <person name="Kim S.N."/>
            <person name="Kim S.W."/>
            <person name="Choi I.H."/>
            <person name="Rhee D.K."/>
        </authorList>
    </citation>
    <scope>NUCLEOTIDE SEQUENCE [GENOMIC DNA] OF 1-117</scope>
    <source>
        <strain>Rx / CP1200</strain>
    </source>
</reference>
<evidence type="ECO:0000255" key="1">
    <source>
        <dbReference type="HAMAP-Rule" id="MF_01151"/>
    </source>
</evidence>
<evidence type="ECO:0000256" key="2">
    <source>
        <dbReference type="SAM" id="MobiDB-lite"/>
    </source>
</evidence>
<evidence type="ECO:0000305" key="3"/>
<dbReference type="EMBL" id="AE005672">
    <property type="protein sequence ID" value="AAK74674.1"/>
    <property type="molecule type" value="Genomic_DNA"/>
</dbReference>
<dbReference type="EMBL" id="AF117740">
    <property type="protein sequence ID" value="AAD23453.1"/>
    <property type="molecule type" value="Genomic_DNA"/>
</dbReference>
<dbReference type="PIR" id="A95060">
    <property type="entry name" value="A95060"/>
</dbReference>
<dbReference type="RefSeq" id="WP_000046044.1">
    <property type="nucleotide sequence ID" value="NZ_CP155539.1"/>
</dbReference>
<dbReference type="SMR" id="Q97S73"/>
<dbReference type="IntAct" id="Q97S73">
    <property type="interactions" value="11"/>
</dbReference>
<dbReference type="PaxDb" id="170187-SP_0516"/>
<dbReference type="EnsemblBacteria" id="AAK74674">
    <property type="protein sequence ID" value="AAK74674"/>
    <property type="gene ID" value="SP_0516"/>
</dbReference>
<dbReference type="KEGG" id="spn:SP_0516"/>
<dbReference type="eggNOG" id="COG0576">
    <property type="taxonomic scope" value="Bacteria"/>
</dbReference>
<dbReference type="PhylomeDB" id="Q97S73"/>
<dbReference type="BioCyc" id="SPNE170187:G1FZB-531-MONOMER"/>
<dbReference type="Proteomes" id="UP000000585">
    <property type="component" value="Chromosome"/>
</dbReference>
<dbReference type="GO" id="GO:0005737">
    <property type="term" value="C:cytoplasm"/>
    <property type="evidence" value="ECO:0007669"/>
    <property type="project" value="UniProtKB-SubCell"/>
</dbReference>
<dbReference type="GO" id="GO:0000774">
    <property type="term" value="F:adenyl-nucleotide exchange factor activity"/>
    <property type="evidence" value="ECO:0007669"/>
    <property type="project" value="InterPro"/>
</dbReference>
<dbReference type="GO" id="GO:0042803">
    <property type="term" value="F:protein homodimerization activity"/>
    <property type="evidence" value="ECO:0007669"/>
    <property type="project" value="InterPro"/>
</dbReference>
<dbReference type="GO" id="GO:0051087">
    <property type="term" value="F:protein-folding chaperone binding"/>
    <property type="evidence" value="ECO:0007669"/>
    <property type="project" value="InterPro"/>
</dbReference>
<dbReference type="GO" id="GO:0051082">
    <property type="term" value="F:unfolded protein binding"/>
    <property type="evidence" value="ECO:0007669"/>
    <property type="project" value="TreeGrafter"/>
</dbReference>
<dbReference type="GO" id="GO:0006457">
    <property type="term" value="P:protein folding"/>
    <property type="evidence" value="ECO:0007669"/>
    <property type="project" value="InterPro"/>
</dbReference>
<dbReference type="CDD" id="cd00446">
    <property type="entry name" value="GrpE"/>
    <property type="match status" value="1"/>
</dbReference>
<dbReference type="FunFam" id="2.30.22.10:FF:000004">
    <property type="entry name" value="Protein GrpE"/>
    <property type="match status" value="1"/>
</dbReference>
<dbReference type="FunFam" id="3.90.20.20:FF:000007">
    <property type="entry name" value="Protein GrpE"/>
    <property type="match status" value="1"/>
</dbReference>
<dbReference type="Gene3D" id="3.90.20.20">
    <property type="match status" value="1"/>
</dbReference>
<dbReference type="Gene3D" id="2.30.22.10">
    <property type="entry name" value="Head domain of nucleotide exchange factor GrpE"/>
    <property type="match status" value="1"/>
</dbReference>
<dbReference type="HAMAP" id="MF_01151">
    <property type="entry name" value="GrpE"/>
    <property type="match status" value="1"/>
</dbReference>
<dbReference type="InterPro" id="IPR000740">
    <property type="entry name" value="GrpE"/>
</dbReference>
<dbReference type="InterPro" id="IPR013805">
    <property type="entry name" value="GrpE_coiled_coil"/>
</dbReference>
<dbReference type="InterPro" id="IPR009012">
    <property type="entry name" value="GrpE_head"/>
</dbReference>
<dbReference type="NCBIfam" id="NF010738">
    <property type="entry name" value="PRK14140.1"/>
    <property type="match status" value="1"/>
</dbReference>
<dbReference type="NCBIfam" id="NF010753">
    <property type="entry name" value="PRK14156.1"/>
    <property type="match status" value="1"/>
</dbReference>
<dbReference type="NCBIfam" id="NF010759">
    <property type="entry name" value="PRK14162.1"/>
    <property type="match status" value="1"/>
</dbReference>
<dbReference type="PANTHER" id="PTHR21237">
    <property type="entry name" value="GRPE PROTEIN"/>
    <property type="match status" value="1"/>
</dbReference>
<dbReference type="PANTHER" id="PTHR21237:SF23">
    <property type="entry name" value="GRPE PROTEIN HOMOLOG, MITOCHONDRIAL"/>
    <property type="match status" value="1"/>
</dbReference>
<dbReference type="Pfam" id="PF01025">
    <property type="entry name" value="GrpE"/>
    <property type="match status" value="1"/>
</dbReference>
<dbReference type="PRINTS" id="PR00773">
    <property type="entry name" value="GRPEPROTEIN"/>
</dbReference>
<dbReference type="SUPFAM" id="SSF58014">
    <property type="entry name" value="Coiled-coil domain of nucleotide exchange factor GrpE"/>
    <property type="match status" value="1"/>
</dbReference>
<dbReference type="SUPFAM" id="SSF51064">
    <property type="entry name" value="Head domain of nucleotide exchange factor GrpE"/>
    <property type="match status" value="1"/>
</dbReference>
<dbReference type="PROSITE" id="PS01071">
    <property type="entry name" value="GRPE"/>
    <property type="match status" value="1"/>
</dbReference>
<accession>Q97S73</accession>
<accession>Q9X4R3</accession>
<gene>
    <name evidence="1" type="primary">grpE</name>
    <name type="ordered locus">SP_0516</name>
</gene>
<organism>
    <name type="scientific">Streptococcus pneumoniae serotype 4 (strain ATCC BAA-334 / TIGR4)</name>
    <dbReference type="NCBI Taxonomy" id="170187"/>
    <lineage>
        <taxon>Bacteria</taxon>
        <taxon>Bacillati</taxon>
        <taxon>Bacillota</taxon>
        <taxon>Bacilli</taxon>
        <taxon>Lactobacillales</taxon>
        <taxon>Streptococcaceae</taxon>
        <taxon>Streptococcus</taxon>
    </lineage>
</organism>
<protein>
    <recommendedName>
        <fullName evidence="1">Protein GrpE</fullName>
    </recommendedName>
    <alternativeName>
        <fullName evidence="1">HSP-70 cofactor</fullName>
    </alternativeName>
</protein>
<comment type="function">
    <text evidence="1">Participates actively in the response to hyperosmotic and heat shock by preventing the aggregation of stress-denatured proteins, in association with DnaK and GrpE. It is the nucleotide exchange factor for DnaK and may function as a thermosensor. Unfolded proteins bind initially to DnaJ; upon interaction with the DnaJ-bound protein, DnaK hydrolyzes its bound ATP, resulting in the formation of a stable complex. GrpE releases ADP from DnaK; ATP binding to DnaK triggers the release of the substrate protein, thus completing the reaction cycle. Several rounds of ATP-dependent interactions between DnaJ, DnaK and GrpE are required for fully efficient folding.</text>
</comment>
<comment type="subunit">
    <text evidence="1">Homodimer.</text>
</comment>
<comment type="interaction">
    <interactant intactId="EBI-2207065">
        <id>Q97S73</id>
    </interactant>
    <interactant intactId="EBI-2207344">
        <id>P0A2W6</id>
        <label>acpS</label>
    </interactant>
    <organismsDiffer>false</organismsDiffer>
    <experiments>2</experiments>
</comment>
<comment type="interaction">
    <interactant intactId="EBI-2207065">
        <id>Q97S73</id>
    </interactant>
    <interactant intactId="EBI-2207316">
        <id>P63544</id>
        <label>apt</label>
    </interactant>
    <organismsDiffer>false</organismsDiffer>
    <experiments>2</experiments>
</comment>
<comment type="interaction">
    <interactant intactId="EBI-2207065">
        <id>Q97S73</id>
    </interactant>
    <interactant intactId="EBI-2207079">
        <id>P95830</id>
        <label>dnaJ</label>
    </interactant>
    <organismsDiffer>false</organismsDiffer>
    <experiments>2</experiments>
</comment>
<comment type="interaction">
    <interactant intactId="EBI-2207065">
        <id>Q97S73</id>
    </interactant>
    <interactant intactId="EBI-2207206">
        <id>Q97QS2</id>
        <label>eno</label>
    </interactant>
    <organismsDiffer>false</organismsDiffer>
    <experiments>2</experiments>
</comment>
<comment type="interaction">
    <interactant intactId="EBI-2207065">
        <id>Q97S73</id>
    </interactant>
    <interactant intactId="EBI-2207053">
        <id>Q97SE5</id>
        <label>gatC</label>
    </interactant>
    <organismsDiffer>false</organismsDiffer>
    <experiments>2</experiments>
</comment>
<comment type="interaction">
    <interactant intactId="EBI-2207065">
        <id>Q97S73</id>
    </interactant>
    <interactant intactId="EBI-2206949">
        <id>Q97NV3</id>
        <label>groES</label>
    </interactant>
    <organismsDiffer>false</organismsDiffer>
    <experiments>2</experiments>
</comment>
<comment type="interaction">
    <interactant intactId="EBI-2207065">
        <id>Q97S73</id>
    </interactant>
    <interactant intactId="EBI-2207149">
        <id>P65144</id>
        <label>infC</label>
    </interactant>
    <organismsDiffer>false</organismsDiffer>
    <experiments>2</experiments>
</comment>
<comment type="interaction">
    <interactant intactId="EBI-2207065">
        <id>Q97S73</id>
    </interactant>
    <interactant intactId="EBI-2207232">
        <id>P41354</id>
        <label>mutX</label>
    </interactant>
    <organismsDiffer>false</organismsDiffer>
    <experiments>2</experiments>
</comment>
<comment type="interaction">
    <interactant intactId="EBI-2207065">
        <id>Q97S73</id>
    </interactant>
    <interactant intactId="EBI-2206955">
        <id>P65887</id>
        <label>purA</label>
    </interactant>
    <organismsDiffer>false</organismsDiffer>
    <experiments>2</experiments>
</comment>
<comment type="interaction">
    <interactant intactId="EBI-2207065">
        <id>Q97S73</id>
    </interactant>
    <interactant intactId="EBI-2206983">
        <id>Q97SR4</id>
        <label>uppS</label>
    </interactant>
    <organismsDiffer>false</organismsDiffer>
    <experiments>2</experiments>
</comment>
<comment type="interaction">
    <interactant intactId="EBI-2207065">
        <id>Q97S73</id>
    </interactant>
    <interactant intactId="EBI-2207218">
        <id>Q97QP2</id>
        <label>xerS</label>
    </interactant>
    <organismsDiffer>false</organismsDiffer>
    <experiments>2</experiments>
</comment>
<comment type="subcellular location">
    <subcellularLocation>
        <location evidence="1">Cytoplasm</location>
    </subcellularLocation>
</comment>
<comment type="similarity">
    <text evidence="1">Belongs to the GrpE family.</text>
</comment>
<keyword id="KW-0143">Chaperone</keyword>
<keyword id="KW-0963">Cytoplasm</keyword>
<keyword id="KW-1185">Reference proteome</keyword>
<keyword id="KW-0346">Stress response</keyword>
<feature type="chain" id="PRO_0000113871" description="Protein GrpE">
    <location>
        <begin position="1"/>
        <end position="174"/>
    </location>
</feature>
<feature type="region of interest" description="Disordered" evidence="2">
    <location>
        <begin position="1"/>
        <end position="35"/>
    </location>
</feature>
<feature type="compositionally biased region" description="Basic and acidic residues" evidence="2">
    <location>
        <begin position="17"/>
        <end position="35"/>
    </location>
</feature>
<feature type="sequence conflict" description="In Ref. 2; AAD23453." evidence="3" ref="2">
    <original>K</original>
    <variation>E</variation>
    <location>
        <position position="20"/>
    </location>
</feature>
<feature type="sequence conflict" description="In Ref. 2; AAD23453." evidence="3" ref="2">
    <original>G</original>
    <variation>A</variation>
    <location>
        <position position="104"/>
    </location>
</feature>
<sequence>MAQDIKNEEVEEVQEEEVVKTAEETTPEKSELDLANERADEFENKYLRAHAEMQNIQRRANEERQNLQRYRSQDLAKAILPSLDNLERALAVEGLTDDVKKGLGMVQESLIHALKEEGIEEIAADGEFDHNYHMAIQTLPADDEHPVDTIAQVFQKGYKLHDRILRPAMVVVYN</sequence>